<protein>
    <recommendedName>
        <fullName evidence="4">UTP--glucose-1-phosphate uridylyltransferase 3, chloroplastic</fullName>
        <ecNumber evidence="2">2.7.7.9</ecNumber>
    </recommendedName>
    <alternativeName>
        <fullName evidence="3">UDP-glucose pyrophosphorylase 3</fullName>
    </alternativeName>
</protein>
<dbReference type="EC" id="2.7.7.9" evidence="2"/>
<dbReference type="EMBL" id="AL163832">
    <property type="protein sequence ID" value="CAB87858.1"/>
    <property type="status" value="ALT_SEQ"/>
    <property type="molecule type" value="Genomic_DNA"/>
</dbReference>
<dbReference type="EMBL" id="CP002686">
    <property type="protein sequence ID" value="AEE79469.1"/>
    <property type="molecule type" value="Genomic_DNA"/>
</dbReference>
<dbReference type="EMBL" id="AY042811">
    <property type="protein sequence ID" value="AAK68751.1"/>
    <property type="status" value="ALT_FRAME"/>
    <property type="molecule type" value="mRNA"/>
</dbReference>
<dbReference type="EMBL" id="AY064665">
    <property type="protein sequence ID" value="AAL47372.1"/>
    <property type="status" value="ALT_FRAME"/>
    <property type="molecule type" value="mRNA"/>
</dbReference>
<dbReference type="PIR" id="T49216">
    <property type="entry name" value="T49216"/>
</dbReference>
<dbReference type="RefSeq" id="NP_567031.1">
    <property type="nucleotide sequence ID" value="NM_115462.4"/>
</dbReference>
<dbReference type="SMR" id="F4IY62"/>
<dbReference type="FunCoup" id="F4IY62">
    <property type="interactions" value="957"/>
</dbReference>
<dbReference type="STRING" id="3702.F4IY62"/>
<dbReference type="GlyGen" id="F4IY62">
    <property type="glycosylation" value="1 site"/>
</dbReference>
<dbReference type="PaxDb" id="3702-AT3G56040.1"/>
<dbReference type="ProteomicsDB" id="246391"/>
<dbReference type="EnsemblPlants" id="AT3G56040.1">
    <property type="protein sequence ID" value="AT3G56040.1"/>
    <property type="gene ID" value="AT3G56040"/>
</dbReference>
<dbReference type="GeneID" id="824770"/>
<dbReference type="Gramene" id="AT3G56040.1">
    <property type="protein sequence ID" value="AT3G56040.1"/>
    <property type="gene ID" value="AT3G56040"/>
</dbReference>
<dbReference type="KEGG" id="ath:AT3G56040"/>
<dbReference type="Araport" id="AT3G56040"/>
<dbReference type="TAIR" id="AT3G56040">
    <property type="gene designation" value="UGP3"/>
</dbReference>
<dbReference type="eggNOG" id="ENOG502QU00">
    <property type="taxonomic scope" value="Eukaryota"/>
</dbReference>
<dbReference type="HOGENOM" id="CLU_016716_0_0_1"/>
<dbReference type="InParanoid" id="F4IY62"/>
<dbReference type="OMA" id="QYGHRCG"/>
<dbReference type="BRENDA" id="2.7.7.9">
    <property type="organism ID" value="399"/>
</dbReference>
<dbReference type="SABIO-RK" id="F4IY62"/>
<dbReference type="PRO" id="PR:F4IY62"/>
<dbReference type="Proteomes" id="UP000006548">
    <property type="component" value="Chromosome 3"/>
</dbReference>
<dbReference type="ExpressionAtlas" id="F4IY62">
    <property type="expression patterns" value="baseline and differential"/>
</dbReference>
<dbReference type="GO" id="GO:0009507">
    <property type="term" value="C:chloroplast"/>
    <property type="evidence" value="ECO:0000314"/>
    <property type="project" value="UniProtKB"/>
</dbReference>
<dbReference type="GO" id="GO:0003983">
    <property type="term" value="F:UTP:glucose-1-phosphate uridylyltransferase activity"/>
    <property type="evidence" value="ECO:0000314"/>
    <property type="project" value="UniProtKB"/>
</dbReference>
<dbReference type="GO" id="GO:0046506">
    <property type="term" value="P:sulfolipid biosynthetic process"/>
    <property type="evidence" value="ECO:0000314"/>
    <property type="project" value="UniProtKB"/>
</dbReference>
<dbReference type="GO" id="GO:0006011">
    <property type="term" value="P:UDP-alpha-D-glucose metabolic process"/>
    <property type="evidence" value="ECO:0000314"/>
    <property type="project" value="UniProtKB"/>
</dbReference>
<dbReference type="FunFam" id="3.90.550.10:FF:000114">
    <property type="entry name" value="UTP--glucose-1-phosphate uridylyltransferase 3 chloroplastic"/>
    <property type="match status" value="1"/>
</dbReference>
<dbReference type="Gene3D" id="3.90.550.10">
    <property type="entry name" value="Spore Coat Polysaccharide Biosynthesis Protein SpsA, Chain A"/>
    <property type="match status" value="1"/>
</dbReference>
<dbReference type="InterPro" id="IPR029044">
    <property type="entry name" value="Nucleotide-diphossugar_trans"/>
</dbReference>
<dbReference type="InterPro" id="IPR039741">
    <property type="entry name" value="UDP-sugar_pyrophosphorylase"/>
</dbReference>
<dbReference type="InterPro" id="IPR002618">
    <property type="entry name" value="UDPGP_fam"/>
</dbReference>
<dbReference type="PANTHER" id="PTHR11952">
    <property type="entry name" value="UDP- GLUCOSE PYROPHOSPHORYLASE"/>
    <property type="match status" value="1"/>
</dbReference>
<dbReference type="PANTHER" id="PTHR11952:SF14">
    <property type="entry name" value="UTP--GLUCOSE-1-PHOSPHATE URIDYLYLTRANSFERASE 3, CHLOROPLASTIC"/>
    <property type="match status" value="1"/>
</dbReference>
<dbReference type="Pfam" id="PF25441">
    <property type="entry name" value="Hexapep_UGP3_C"/>
    <property type="match status" value="1"/>
</dbReference>
<dbReference type="Pfam" id="PF01704">
    <property type="entry name" value="UDPGP"/>
    <property type="match status" value="1"/>
</dbReference>
<dbReference type="SUPFAM" id="SSF53448">
    <property type="entry name" value="Nucleotide-diphospho-sugar transferases"/>
    <property type="match status" value="1"/>
</dbReference>
<keyword id="KW-0150">Chloroplast</keyword>
<keyword id="KW-0548">Nucleotidyltransferase</keyword>
<keyword id="KW-0934">Plastid</keyword>
<keyword id="KW-1185">Reference proteome</keyword>
<keyword id="KW-0808">Transferase</keyword>
<keyword id="KW-0809">Transit peptide</keyword>
<evidence type="ECO:0000255" key="1"/>
<evidence type="ECO:0000269" key="2">
    <source>
    </source>
</evidence>
<evidence type="ECO:0000303" key="3">
    <source>
    </source>
</evidence>
<evidence type="ECO:0000305" key="4"/>
<evidence type="ECO:0000312" key="5">
    <source>
        <dbReference type="Araport" id="AT3G56040"/>
    </source>
</evidence>
<evidence type="ECO:0000312" key="6">
    <source>
        <dbReference type="EMBL" id="CAB87858.1"/>
    </source>
</evidence>
<name>UGPA3_ARATH</name>
<proteinExistence type="evidence at protein level"/>
<reference key="1">
    <citation type="journal article" date="2000" name="Nature">
        <title>Sequence and analysis of chromosome 3 of the plant Arabidopsis thaliana.</title>
        <authorList>
            <person name="Salanoubat M."/>
            <person name="Lemcke K."/>
            <person name="Rieger M."/>
            <person name="Ansorge W."/>
            <person name="Unseld M."/>
            <person name="Fartmann B."/>
            <person name="Valle G."/>
            <person name="Bloecker H."/>
            <person name="Perez-Alonso M."/>
            <person name="Obermaier B."/>
            <person name="Delseny M."/>
            <person name="Boutry M."/>
            <person name="Grivell L.A."/>
            <person name="Mache R."/>
            <person name="Puigdomenech P."/>
            <person name="De Simone V."/>
            <person name="Choisne N."/>
            <person name="Artiguenave F."/>
            <person name="Robert C."/>
            <person name="Brottier P."/>
            <person name="Wincker P."/>
            <person name="Cattolico L."/>
            <person name="Weissenbach J."/>
            <person name="Saurin W."/>
            <person name="Quetier F."/>
            <person name="Schaefer M."/>
            <person name="Mueller-Auer S."/>
            <person name="Gabel C."/>
            <person name="Fuchs M."/>
            <person name="Benes V."/>
            <person name="Wurmbach E."/>
            <person name="Drzonek H."/>
            <person name="Erfle H."/>
            <person name="Jordan N."/>
            <person name="Bangert S."/>
            <person name="Wiedelmann R."/>
            <person name="Kranz H."/>
            <person name="Voss H."/>
            <person name="Holland R."/>
            <person name="Brandt P."/>
            <person name="Nyakatura G."/>
            <person name="Vezzi A."/>
            <person name="D'Angelo M."/>
            <person name="Pallavicini A."/>
            <person name="Toppo S."/>
            <person name="Simionati B."/>
            <person name="Conrad A."/>
            <person name="Hornischer K."/>
            <person name="Kauer G."/>
            <person name="Loehnert T.-H."/>
            <person name="Nordsiek G."/>
            <person name="Reichelt J."/>
            <person name="Scharfe M."/>
            <person name="Schoen O."/>
            <person name="Bargues M."/>
            <person name="Terol J."/>
            <person name="Climent J."/>
            <person name="Navarro P."/>
            <person name="Collado C."/>
            <person name="Perez-Perez A."/>
            <person name="Ottenwaelder B."/>
            <person name="Duchemin D."/>
            <person name="Cooke R."/>
            <person name="Laudie M."/>
            <person name="Berger-Llauro C."/>
            <person name="Purnelle B."/>
            <person name="Masuy D."/>
            <person name="de Haan M."/>
            <person name="Maarse A.C."/>
            <person name="Alcaraz J.-P."/>
            <person name="Cottet A."/>
            <person name="Casacuberta E."/>
            <person name="Monfort A."/>
            <person name="Argiriou A."/>
            <person name="Flores M."/>
            <person name="Liguori R."/>
            <person name="Vitale D."/>
            <person name="Mannhaupt G."/>
            <person name="Haase D."/>
            <person name="Schoof H."/>
            <person name="Rudd S."/>
            <person name="Zaccaria P."/>
            <person name="Mewes H.-W."/>
            <person name="Mayer K.F.X."/>
            <person name="Kaul S."/>
            <person name="Town C.D."/>
            <person name="Koo H.L."/>
            <person name="Tallon L.J."/>
            <person name="Jenkins J."/>
            <person name="Rooney T."/>
            <person name="Rizzo M."/>
            <person name="Walts A."/>
            <person name="Utterback T."/>
            <person name="Fujii C.Y."/>
            <person name="Shea T.P."/>
            <person name="Creasy T.H."/>
            <person name="Haas B."/>
            <person name="Maiti R."/>
            <person name="Wu D."/>
            <person name="Peterson J."/>
            <person name="Van Aken S."/>
            <person name="Pai G."/>
            <person name="Militscher J."/>
            <person name="Sellers P."/>
            <person name="Gill J.E."/>
            <person name="Feldblyum T.V."/>
            <person name="Preuss D."/>
            <person name="Lin X."/>
            <person name="Nierman W.C."/>
            <person name="Salzberg S.L."/>
            <person name="White O."/>
            <person name="Venter J.C."/>
            <person name="Fraser C.M."/>
            <person name="Kaneko T."/>
            <person name="Nakamura Y."/>
            <person name="Sato S."/>
            <person name="Kato T."/>
            <person name="Asamizu E."/>
            <person name="Sasamoto S."/>
            <person name="Kimura T."/>
            <person name="Idesawa K."/>
            <person name="Kawashima K."/>
            <person name="Kishida Y."/>
            <person name="Kiyokawa C."/>
            <person name="Kohara M."/>
            <person name="Matsumoto M."/>
            <person name="Matsuno A."/>
            <person name="Muraki A."/>
            <person name="Nakayama S."/>
            <person name="Nakazaki N."/>
            <person name="Shinpo S."/>
            <person name="Takeuchi C."/>
            <person name="Wada T."/>
            <person name="Watanabe A."/>
            <person name="Yamada M."/>
            <person name="Yasuda M."/>
            <person name="Tabata S."/>
        </authorList>
    </citation>
    <scope>NUCLEOTIDE SEQUENCE [LARGE SCALE GENOMIC DNA]</scope>
    <source>
        <strain>cv. Columbia</strain>
    </source>
</reference>
<reference key="2">
    <citation type="journal article" date="2017" name="Plant J.">
        <title>Araport11: a complete reannotation of the Arabidopsis thaliana reference genome.</title>
        <authorList>
            <person name="Cheng C.Y."/>
            <person name="Krishnakumar V."/>
            <person name="Chan A.P."/>
            <person name="Thibaud-Nissen F."/>
            <person name="Schobel S."/>
            <person name="Town C.D."/>
        </authorList>
    </citation>
    <scope>GENOME REANNOTATION</scope>
    <source>
        <strain>cv. Columbia</strain>
    </source>
</reference>
<reference key="3">
    <citation type="journal article" date="2003" name="Science">
        <title>Empirical analysis of transcriptional activity in the Arabidopsis genome.</title>
        <authorList>
            <person name="Yamada K."/>
            <person name="Lim J."/>
            <person name="Dale J.M."/>
            <person name="Chen H."/>
            <person name="Shinn P."/>
            <person name="Palm C.J."/>
            <person name="Southwick A.M."/>
            <person name="Wu H.C."/>
            <person name="Kim C.J."/>
            <person name="Nguyen M."/>
            <person name="Pham P.K."/>
            <person name="Cheuk R.F."/>
            <person name="Karlin-Newmann G."/>
            <person name="Liu S.X."/>
            <person name="Lam B."/>
            <person name="Sakano H."/>
            <person name="Wu T."/>
            <person name="Yu G."/>
            <person name="Miranda M."/>
            <person name="Quach H.L."/>
            <person name="Tripp M."/>
            <person name="Chang C.H."/>
            <person name="Lee J.M."/>
            <person name="Toriumi M.J."/>
            <person name="Chan M.M."/>
            <person name="Tang C.C."/>
            <person name="Onodera C.S."/>
            <person name="Deng J.M."/>
            <person name="Akiyama K."/>
            <person name="Ansari Y."/>
            <person name="Arakawa T."/>
            <person name="Banh J."/>
            <person name="Banno F."/>
            <person name="Bowser L."/>
            <person name="Brooks S.Y."/>
            <person name="Carninci P."/>
            <person name="Chao Q."/>
            <person name="Choy N."/>
            <person name="Enju A."/>
            <person name="Goldsmith A.D."/>
            <person name="Gurjal M."/>
            <person name="Hansen N.F."/>
            <person name="Hayashizaki Y."/>
            <person name="Johnson-Hopson C."/>
            <person name="Hsuan V.W."/>
            <person name="Iida K."/>
            <person name="Karnes M."/>
            <person name="Khan S."/>
            <person name="Koesema E."/>
            <person name="Ishida J."/>
            <person name="Jiang P.X."/>
            <person name="Jones T."/>
            <person name="Kawai J."/>
            <person name="Kamiya A."/>
            <person name="Meyers C."/>
            <person name="Nakajima M."/>
            <person name="Narusaka M."/>
            <person name="Seki M."/>
            <person name="Sakurai T."/>
            <person name="Satou M."/>
            <person name="Tamse R."/>
            <person name="Vaysberg M."/>
            <person name="Wallender E.K."/>
            <person name="Wong C."/>
            <person name="Yamamura Y."/>
            <person name="Yuan S."/>
            <person name="Shinozaki K."/>
            <person name="Davis R.W."/>
            <person name="Theologis A."/>
            <person name="Ecker J.R."/>
        </authorList>
    </citation>
    <scope>NUCLEOTIDE SEQUENCE [LARGE SCALE MRNA]</scope>
    <source>
        <strain>cv. Columbia</strain>
    </source>
</reference>
<reference key="4">
    <citation type="journal article" date="2009" name="Plant Cell">
        <title>A chloroplastic UDP-glucose pyrophosphorylase from Arabidopsis is the committed enzyme for the first step of sulfolipid biosynthesis.</title>
        <authorList>
            <person name="Okazaki Y."/>
            <person name="Shimojima M."/>
            <person name="Sawada Y."/>
            <person name="Toyooka K."/>
            <person name="Narisawa T."/>
            <person name="Mochida K."/>
            <person name="Tanaka H."/>
            <person name="Matsuda F."/>
            <person name="Hirai A."/>
            <person name="Hirai M.Y."/>
            <person name="Ohta H."/>
            <person name="Saito K."/>
        </authorList>
    </citation>
    <scope>FUNCTION</scope>
    <scope>CATALYTIC ACTIVITY</scope>
    <scope>COFACTOR</scope>
    <scope>ACTIVITY REGULATION</scope>
    <scope>BIOPHYSICOCHEMICAL PROPERTIES</scope>
    <scope>SUBCELLULAR LOCATION</scope>
    <scope>INDUCTION BY PHOSPHATE STARVATION</scope>
</reference>
<gene>
    <name evidence="3" type="primary">UGP3</name>
    <name evidence="5" type="ordered locus">At3g56040</name>
    <name evidence="6" type="ORF">F27K19_220</name>
</gene>
<sequence>MANPQASPILHHPQNHLSLFHFRTTTSPRSFSSLHFRKPLLFLSSSSSFSSKLQQSEQQCNNHQVRHVSTVPVEYSTPTPPESDDFLSEIDRLKSLLSKLDVSKDLRRKDAVIDADSRVRRFFSENRGGLSKVFGYLGLNSNEMFLVKCVIAAGQEHALCMNYEEAFGEEEEEYTVRSSVKNALYALVEMIERFDVNSSGYKGRREMGTVLDSEEIAHFRKFLTFLEEIEQFYDCIGGIIGYQVMVLELLHQSSKRRNTNRSQLVEESLGCQYLEMHTPSVLDLTQEEDYASQAALWGIEGLPDLGEIYPLGGAADRLGLIDSETGECLPAAMLAHCGRTLLEGLIRDLQAREFLYFKLYGKQCVTPVAIMTSAAKNNHEHVSSLCERLKWFGRGQSNFRLFEQPLVPAVSAEDGQWIVSKPFVPVSKPGGHGVIWKLAYDKGVFNWFYDHGRKGATVRQVSNVVAATDVTLLALAGIGLRYNKKLGFASCKRNAGATEGINVLMEKKNFDGKWEYGISCIEYTEFDKFDISNRSPSSNGLQADFPANTNILYVDLHSAELIGSSSNAKSLPNMVLNTKKRIEYLDQYGDYHSVMGGRLECTMQNIADNFFNKFPSRCHGSLEDKLDTYIVYNERRKVTSSAKKKKPHASAALHQTPDGALLDILRNGYDLLTECDIKLPMIEANDKYVDSPPPYLILLHPALGPLWEVSRQKFKGGSISSCSELQLEIAEFSWNNVQVDGSLIVTAENAMGSTTPNDNGEPILQYGLRCGKCKLHNVNVVNRGIDWNSKSNVYWRNDVNRLETCKIILHGNAEFEASNVTIEGHHVFEVPDGHKLKITSGNAGLSINLEALKEEVMETGSWYWNYQLNGSHIHLQQVEVSQS</sequence>
<accession>F4IY62</accession>
<accession>Q94B70</accession>
<accession>Q9LY42</accession>
<feature type="transit peptide" description="Chloroplast" evidence="1">
    <location>
        <begin position="1"/>
        <end position="72"/>
    </location>
</feature>
<feature type="chain" id="PRO_0000436030" description="UTP--glucose-1-phosphate uridylyltransferase 3, chloroplastic" evidence="1">
    <location>
        <begin position="73"/>
        <end position="883"/>
    </location>
</feature>
<comment type="function">
    <text evidence="2">Involved in the biosynthesis of sulfolipids in the chloroplast. Catalyzes the first committed step in sulfolipid biosynthesis. Converts glucose 1-phosphate to UDP-glucose, the precursor of the polar head of sulfolipid. In addition to glucose 1-phosphate, can use galactose 1-phosphate, but with much lower activity. No uridyltransferase activity with other hexose monophosphates. Specific for UTP and cannot use ATP, CTP, and GTP.</text>
</comment>
<comment type="catalytic activity">
    <reaction evidence="2">
        <text>alpha-D-glucose 1-phosphate + UTP + H(+) = UDP-alpha-D-glucose + diphosphate</text>
        <dbReference type="Rhea" id="RHEA:19889"/>
        <dbReference type="ChEBI" id="CHEBI:15378"/>
        <dbReference type="ChEBI" id="CHEBI:33019"/>
        <dbReference type="ChEBI" id="CHEBI:46398"/>
        <dbReference type="ChEBI" id="CHEBI:58601"/>
        <dbReference type="ChEBI" id="CHEBI:58885"/>
        <dbReference type="EC" id="2.7.7.9"/>
    </reaction>
</comment>
<comment type="cofactor">
    <cofactor evidence="2">
        <name>Mg(2+)</name>
        <dbReference type="ChEBI" id="CHEBI:18420"/>
    </cofactor>
</comment>
<comment type="activity regulation">
    <text evidence="2">Inhibited by pyrophosphate.</text>
</comment>
<comment type="biophysicochemical properties">
    <kinetics>
        <KM evidence="2">0.24 mM for glucose 1-phosphate</KM>
        <KM evidence="2">0.031 mM for UTP</KM>
    </kinetics>
</comment>
<comment type="subcellular location">
    <subcellularLocation>
        <location evidence="2">Plastid</location>
        <location evidence="2">Chloroplast</location>
    </subcellularLocation>
</comment>
<comment type="induction">
    <text evidence="2">Induced by phosphate starvation.</text>
</comment>
<comment type="similarity">
    <text evidence="4">Belongs to the UDPGP type 1 family.</text>
</comment>
<comment type="sequence caution" evidence="4">
    <conflict type="frameshift">
        <sequence resource="EMBL-CDS" id="AAK68751"/>
    </conflict>
</comment>
<comment type="sequence caution" evidence="4">
    <conflict type="frameshift">
        <sequence resource="EMBL-CDS" id="AAL47372"/>
    </conflict>
</comment>
<comment type="sequence caution" evidence="4">
    <conflict type="erroneous gene model prediction">
        <sequence resource="EMBL-CDS" id="CAB87858"/>
    </conflict>
</comment>
<organism>
    <name type="scientific">Arabidopsis thaliana</name>
    <name type="common">Mouse-ear cress</name>
    <dbReference type="NCBI Taxonomy" id="3702"/>
    <lineage>
        <taxon>Eukaryota</taxon>
        <taxon>Viridiplantae</taxon>
        <taxon>Streptophyta</taxon>
        <taxon>Embryophyta</taxon>
        <taxon>Tracheophyta</taxon>
        <taxon>Spermatophyta</taxon>
        <taxon>Magnoliopsida</taxon>
        <taxon>eudicotyledons</taxon>
        <taxon>Gunneridae</taxon>
        <taxon>Pentapetalae</taxon>
        <taxon>rosids</taxon>
        <taxon>malvids</taxon>
        <taxon>Brassicales</taxon>
        <taxon>Brassicaceae</taxon>
        <taxon>Camelineae</taxon>
        <taxon>Arabidopsis</taxon>
    </lineage>
</organism>